<organism>
    <name type="scientific">Oryza sativa subsp. japonica</name>
    <name type="common">Rice</name>
    <dbReference type="NCBI Taxonomy" id="39947"/>
    <lineage>
        <taxon>Eukaryota</taxon>
        <taxon>Viridiplantae</taxon>
        <taxon>Streptophyta</taxon>
        <taxon>Embryophyta</taxon>
        <taxon>Tracheophyta</taxon>
        <taxon>Spermatophyta</taxon>
        <taxon>Magnoliopsida</taxon>
        <taxon>Liliopsida</taxon>
        <taxon>Poales</taxon>
        <taxon>Poaceae</taxon>
        <taxon>BOP clade</taxon>
        <taxon>Oryzoideae</taxon>
        <taxon>Oryzeae</taxon>
        <taxon>Oryzinae</taxon>
        <taxon>Oryza</taxon>
        <taxon>Oryza sativa</taxon>
    </lineage>
</organism>
<name>IDEFH_ORYSJ</name>
<dbReference type="EMBL" id="BR000655">
    <property type="protein sequence ID" value="FAA00381.1"/>
    <property type="molecule type" value="mRNA"/>
</dbReference>
<dbReference type="EMBL" id="AL606668">
    <property type="protein sequence ID" value="CAE05755.1"/>
    <property type="molecule type" value="Genomic_DNA"/>
</dbReference>
<dbReference type="EMBL" id="AP008210">
    <property type="protein sequence ID" value="BAF16171.1"/>
    <property type="molecule type" value="Genomic_DNA"/>
</dbReference>
<dbReference type="EMBL" id="AP014960">
    <property type="protein sequence ID" value="BAS91625.1"/>
    <property type="molecule type" value="Genomic_DNA"/>
</dbReference>
<dbReference type="EMBL" id="CM000141">
    <property type="protein sequence ID" value="EAZ32405.1"/>
    <property type="molecule type" value="Genomic_DNA"/>
</dbReference>
<dbReference type="EMBL" id="AK072874">
    <property type="status" value="NOT_ANNOTATED_CDS"/>
    <property type="molecule type" value="mRNA"/>
</dbReference>
<dbReference type="RefSeq" id="XP_015635183.1">
    <property type="nucleotide sequence ID" value="XM_015779697.1"/>
</dbReference>
<dbReference type="SMR" id="Q7XKC5"/>
<dbReference type="FunCoup" id="Q7XKC5">
    <property type="interactions" value="26"/>
</dbReference>
<dbReference type="PaxDb" id="39947-Q7XKC5"/>
<dbReference type="EnsemblPlants" id="Os04t0676600-01">
    <property type="protein sequence ID" value="Os04t0676600-01"/>
    <property type="gene ID" value="Os04g0676600"/>
</dbReference>
<dbReference type="Gramene" id="Os04t0676600-01">
    <property type="protein sequence ID" value="Os04t0676600-01"/>
    <property type="gene ID" value="Os04g0676600"/>
</dbReference>
<dbReference type="KEGG" id="dosa:Os04g0676600"/>
<dbReference type="eggNOG" id="ENOG502S3BX">
    <property type="taxonomic scope" value="Eukaryota"/>
</dbReference>
<dbReference type="HOGENOM" id="CLU_025764_0_0_1"/>
<dbReference type="InParanoid" id="Q7XKC5"/>
<dbReference type="OMA" id="PMCNGPP"/>
<dbReference type="OrthoDB" id="757982at2759"/>
<dbReference type="Proteomes" id="UP000000763">
    <property type="component" value="Chromosome 4"/>
</dbReference>
<dbReference type="Proteomes" id="UP000007752">
    <property type="component" value="Chromosome 4"/>
</dbReference>
<dbReference type="Proteomes" id="UP000059680">
    <property type="component" value="Chromosome 4"/>
</dbReference>
<dbReference type="GO" id="GO:0005634">
    <property type="term" value="C:nucleus"/>
    <property type="evidence" value="ECO:0007669"/>
    <property type="project" value="UniProtKB-SubCell"/>
</dbReference>
<dbReference type="GO" id="GO:0003677">
    <property type="term" value="F:DNA binding"/>
    <property type="evidence" value="ECO:0000314"/>
    <property type="project" value="UniProtKB"/>
</dbReference>
<dbReference type="GO" id="GO:0003700">
    <property type="term" value="F:DNA-binding transcription factor activity"/>
    <property type="evidence" value="ECO:0007669"/>
    <property type="project" value="InterPro"/>
</dbReference>
<dbReference type="CDD" id="cd10017">
    <property type="entry name" value="B3_DNA"/>
    <property type="match status" value="1"/>
</dbReference>
<dbReference type="FunFam" id="2.40.330.10:FF:000003">
    <property type="entry name" value="B3 domain-containing transcription factor FUS3"/>
    <property type="match status" value="1"/>
</dbReference>
<dbReference type="Gene3D" id="2.40.330.10">
    <property type="entry name" value="DNA-binding pseudobarrel domain"/>
    <property type="match status" value="1"/>
</dbReference>
<dbReference type="InterPro" id="IPR003340">
    <property type="entry name" value="B3_DNA-bd"/>
</dbReference>
<dbReference type="InterPro" id="IPR015300">
    <property type="entry name" value="DNA-bd_pseudobarrel_sf"/>
</dbReference>
<dbReference type="InterPro" id="IPR044800">
    <property type="entry name" value="LEC2-like"/>
</dbReference>
<dbReference type="PANTHER" id="PTHR31140:SF12">
    <property type="entry name" value="B3 DOMAIN-CONTAINING PROTEIN OS04G0676650-RELATED"/>
    <property type="match status" value="1"/>
</dbReference>
<dbReference type="PANTHER" id="PTHR31140">
    <property type="entry name" value="B3 DOMAIN-CONTAINING TRANSCRIPTION FACTOR ABI3"/>
    <property type="match status" value="1"/>
</dbReference>
<dbReference type="Pfam" id="PF02362">
    <property type="entry name" value="B3"/>
    <property type="match status" value="1"/>
</dbReference>
<dbReference type="SMART" id="SM01019">
    <property type="entry name" value="B3"/>
    <property type="match status" value="1"/>
</dbReference>
<dbReference type="SUPFAM" id="SSF101936">
    <property type="entry name" value="DNA-binding pseudobarrel domain"/>
    <property type="match status" value="1"/>
</dbReference>
<dbReference type="PROSITE" id="PS50863">
    <property type="entry name" value="B3"/>
    <property type="match status" value="1"/>
</dbReference>
<evidence type="ECO:0000255" key="1">
    <source>
        <dbReference type="PROSITE-ProRule" id="PRU00326"/>
    </source>
</evidence>
<evidence type="ECO:0000256" key="2">
    <source>
        <dbReference type="SAM" id="MobiDB-lite"/>
    </source>
</evidence>
<evidence type="ECO:0000269" key="3">
    <source>
    </source>
</evidence>
<evidence type="ECO:0000303" key="4">
    <source>
    </source>
</evidence>
<evidence type="ECO:0000305" key="5"/>
<evidence type="ECO:0000312" key="6">
    <source>
        <dbReference type="EMBL" id="BAS91625.1"/>
    </source>
</evidence>
<evidence type="ECO:0000312" key="7">
    <source>
        <dbReference type="EMBL" id="CAE05755.1"/>
    </source>
</evidence>
<evidence type="ECO:0000312" key="8">
    <source>
        <dbReference type="EMBL" id="EAZ32405.1"/>
    </source>
</evidence>
<sequence>MADTRGSTSSGGGDDRGREGHDDFTGGGQYNRYHRILEAVPSPLVRRENGVHHQYPTGLIHHPSSTMPVAPCSYVPRYTMVPTSAMLPLQHHHRQLQISQENFQDRVPSNNVAAPHLPSNFQDLRPMCNGPPFMSYGQTASNRNVLYQNLTPYSFNAWASNNMPRNPVYTSYHPTAIEDPHATPFHINNHDTDQGFFTVSTSFRVDQSFVHAPSPFPPVSSSSRSFSSAQISNGPIDAKKAKKSDIKDQPIVLRRSDTESEKNDELDQTPASEPSSMSHNSANSTIRFNCREYRVILRKELTNSDVGNIGRIVMPKRDAEAHLPALHQREGVMLKMDDFKLETTWNFKYRFWPNNKSRMYVLESTGGFVKQHGLQTGDIFIIYKSSESEKLVVRGEKAIKPNVIMPIVDCSCKNDLNNSEECGFAISLLTKKT</sequence>
<accession>Q7XKC5</accession>
<accession>A0A0N7KJX4</accession>
<accession>A3AYL6</accession>
<accession>A9JTY6</accession>
<proteinExistence type="evidence at transcript level"/>
<feature type="chain" id="PRO_0000376939" description="B3 domain-containing protein Os04g0676600">
    <location>
        <begin position="1"/>
        <end position="433"/>
    </location>
</feature>
<feature type="DNA-binding region" description="TF-B3" evidence="1">
    <location>
        <begin position="297"/>
        <end position="399"/>
    </location>
</feature>
<feature type="region of interest" description="Disordered" evidence="2">
    <location>
        <begin position="1"/>
        <end position="29"/>
    </location>
</feature>
<feature type="region of interest" description="Disordered" evidence="2">
    <location>
        <begin position="216"/>
        <end position="283"/>
    </location>
</feature>
<feature type="compositionally biased region" description="Basic and acidic residues" evidence="2">
    <location>
        <begin position="13"/>
        <end position="24"/>
    </location>
</feature>
<feature type="compositionally biased region" description="Low complexity" evidence="2">
    <location>
        <begin position="216"/>
        <end position="229"/>
    </location>
</feature>
<feature type="compositionally biased region" description="Basic and acidic residues" evidence="2">
    <location>
        <begin position="237"/>
        <end position="265"/>
    </location>
</feature>
<feature type="compositionally biased region" description="Polar residues" evidence="2">
    <location>
        <begin position="269"/>
        <end position="283"/>
    </location>
</feature>
<feature type="sequence conflict" description="In Ref. 7; AK072874." evidence="5" ref="7">
    <original>N</original>
    <variation>D</variation>
    <location>
        <position position="102"/>
    </location>
</feature>
<feature type="sequence conflict" description="In Ref. 2; CAE05755, 3; BAF16171 and 6; EAZ32405." ref="2 3 6">
    <original>G</original>
    <variation>V</variation>
    <location>
        <position position="373"/>
    </location>
</feature>
<protein>
    <recommendedName>
        <fullName evidence="5">B3 domain-containing protein Os04g0676600</fullName>
    </recommendedName>
    <alternativeName>
        <fullName evidence="4">Protein IDEF1 homolog</fullName>
    </alternativeName>
</protein>
<reference key="1">
    <citation type="journal article" date="2007" name="Proc. Natl. Acad. Sci. U.S.A.">
        <title>The transcription factor IDEF1 regulates the response to and tolerance of iron deficiency in plants.</title>
        <authorList>
            <person name="Kobayashi T."/>
            <person name="Ogo Y."/>
            <person name="Nakanishi Itai R."/>
            <person name="Nakanishi H."/>
            <person name="Takahashi M."/>
            <person name="Mori S."/>
            <person name="Nishizawa N.K."/>
        </authorList>
    </citation>
    <scope>NUCLEOTIDE SEQUENCE [MRNA]</scope>
    <scope>IDENTIFICATION</scope>
    <scope>FUNCTION</scope>
    <source>
        <strain>cv. Nipponbare</strain>
    </source>
</reference>
<reference key="2">
    <citation type="journal article" date="2002" name="Nature">
        <title>Sequence and analysis of rice chromosome 4.</title>
        <authorList>
            <person name="Feng Q."/>
            <person name="Zhang Y."/>
            <person name="Hao P."/>
            <person name="Wang S."/>
            <person name="Fu G."/>
            <person name="Huang Y."/>
            <person name="Li Y."/>
            <person name="Zhu J."/>
            <person name="Liu Y."/>
            <person name="Hu X."/>
            <person name="Jia P."/>
            <person name="Zhang Y."/>
            <person name="Zhao Q."/>
            <person name="Ying K."/>
            <person name="Yu S."/>
            <person name="Tang Y."/>
            <person name="Weng Q."/>
            <person name="Zhang L."/>
            <person name="Lu Y."/>
            <person name="Mu J."/>
            <person name="Lu Y."/>
            <person name="Zhang L.S."/>
            <person name="Yu Z."/>
            <person name="Fan D."/>
            <person name="Liu X."/>
            <person name="Lu T."/>
            <person name="Li C."/>
            <person name="Wu Y."/>
            <person name="Sun T."/>
            <person name="Lei H."/>
            <person name="Li T."/>
            <person name="Hu H."/>
            <person name="Guan J."/>
            <person name="Wu M."/>
            <person name="Zhang R."/>
            <person name="Zhou B."/>
            <person name="Chen Z."/>
            <person name="Chen L."/>
            <person name="Jin Z."/>
            <person name="Wang R."/>
            <person name="Yin H."/>
            <person name="Cai Z."/>
            <person name="Ren S."/>
            <person name="Lv G."/>
            <person name="Gu W."/>
            <person name="Zhu G."/>
            <person name="Tu Y."/>
            <person name="Jia J."/>
            <person name="Zhang Y."/>
            <person name="Chen J."/>
            <person name="Kang H."/>
            <person name="Chen X."/>
            <person name="Shao C."/>
            <person name="Sun Y."/>
            <person name="Hu Q."/>
            <person name="Zhang X."/>
            <person name="Zhang W."/>
            <person name="Wang L."/>
            <person name="Ding C."/>
            <person name="Sheng H."/>
            <person name="Gu J."/>
            <person name="Chen S."/>
            <person name="Ni L."/>
            <person name="Zhu F."/>
            <person name="Chen W."/>
            <person name="Lan L."/>
            <person name="Lai Y."/>
            <person name="Cheng Z."/>
            <person name="Gu M."/>
            <person name="Jiang J."/>
            <person name="Li J."/>
            <person name="Hong G."/>
            <person name="Xue Y."/>
            <person name="Han B."/>
        </authorList>
    </citation>
    <scope>NUCLEOTIDE SEQUENCE [LARGE SCALE GENOMIC DNA]</scope>
    <source>
        <strain>cv. Nipponbare</strain>
    </source>
</reference>
<reference key="3">
    <citation type="journal article" date="2005" name="Nature">
        <title>The map-based sequence of the rice genome.</title>
        <authorList>
            <consortium name="International rice genome sequencing project (IRGSP)"/>
        </authorList>
    </citation>
    <scope>NUCLEOTIDE SEQUENCE [LARGE SCALE GENOMIC DNA]</scope>
    <source>
        <strain>cv. Nipponbare</strain>
    </source>
</reference>
<reference key="4">
    <citation type="journal article" date="2008" name="Nucleic Acids Res.">
        <title>The rice annotation project database (RAP-DB): 2008 update.</title>
        <authorList>
            <consortium name="The rice annotation project (RAP)"/>
        </authorList>
    </citation>
    <scope>GENOME REANNOTATION</scope>
    <source>
        <strain>cv. Nipponbare</strain>
    </source>
</reference>
<reference key="5">
    <citation type="journal article" date="2013" name="Rice">
        <title>Improvement of the Oryza sativa Nipponbare reference genome using next generation sequence and optical map data.</title>
        <authorList>
            <person name="Kawahara Y."/>
            <person name="de la Bastide M."/>
            <person name="Hamilton J.P."/>
            <person name="Kanamori H."/>
            <person name="McCombie W.R."/>
            <person name="Ouyang S."/>
            <person name="Schwartz D.C."/>
            <person name="Tanaka T."/>
            <person name="Wu J."/>
            <person name="Zhou S."/>
            <person name="Childs K.L."/>
            <person name="Davidson R.M."/>
            <person name="Lin H."/>
            <person name="Quesada-Ocampo L."/>
            <person name="Vaillancourt B."/>
            <person name="Sakai H."/>
            <person name="Lee S.S."/>
            <person name="Kim J."/>
            <person name="Numa H."/>
            <person name="Itoh T."/>
            <person name="Buell C.R."/>
            <person name="Matsumoto T."/>
        </authorList>
    </citation>
    <scope>GENOME REANNOTATION</scope>
    <scope>SEQUENCE REVISION TO 373</scope>
    <source>
        <strain>cv. Nipponbare</strain>
    </source>
</reference>
<reference key="6">
    <citation type="journal article" date="2005" name="PLoS Biol.">
        <title>The genomes of Oryza sativa: a history of duplications.</title>
        <authorList>
            <person name="Yu J."/>
            <person name="Wang J."/>
            <person name="Lin W."/>
            <person name="Li S."/>
            <person name="Li H."/>
            <person name="Zhou J."/>
            <person name="Ni P."/>
            <person name="Dong W."/>
            <person name="Hu S."/>
            <person name="Zeng C."/>
            <person name="Zhang J."/>
            <person name="Zhang Y."/>
            <person name="Li R."/>
            <person name="Xu Z."/>
            <person name="Li S."/>
            <person name="Li X."/>
            <person name="Zheng H."/>
            <person name="Cong L."/>
            <person name="Lin L."/>
            <person name="Yin J."/>
            <person name="Geng J."/>
            <person name="Li G."/>
            <person name="Shi J."/>
            <person name="Liu J."/>
            <person name="Lv H."/>
            <person name="Li J."/>
            <person name="Wang J."/>
            <person name="Deng Y."/>
            <person name="Ran L."/>
            <person name="Shi X."/>
            <person name="Wang X."/>
            <person name="Wu Q."/>
            <person name="Li C."/>
            <person name="Ren X."/>
            <person name="Wang J."/>
            <person name="Wang X."/>
            <person name="Li D."/>
            <person name="Liu D."/>
            <person name="Zhang X."/>
            <person name="Ji Z."/>
            <person name="Zhao W."/>
            <person name="Sun Y."/>
            <person name="Zhang Z."/>
            <person name="Bao J."/>
            <person name="Han Y."/>
            <person name="Dong L."/>
            <person name="Ji J."/>
            <person name="Chen P."/>
            <person name="Wu S."/>
            <person name="Liu J."/>
            <person name="Xiao Y."/>
            <person name="Bu D."/>
            <person name="Tan J."/>
            <person name="Yang L."/>
            <person name="Ye C."/>
            <person name="Zhang J."/>
            <person name="Xu J."/>
            <person name="Zhou Y."/>
            <person name="Yu Y."/>
            <person name="Zhang B."/>
            <person name="Zhuang S."/>
            <person name="Wei H."/>
            <person name="Liu B."/>
            <person name="Lei M."/>
            <person name="Yu H."/>
            <person name="Li Y."/>
            <person name="Xu H."/>
            <person name="Wei S."/>
            <person name="He X."/>
            <person name="Fang L."/>
            <person name="Zhang Z."/>
            <person name="Zhang Y."/>
            <person name="Huang X."/>
            <person name="Su Z."/>
            <person name="Tong W."/>
            <person name="Li J."/>
            <person name="Tong Z."/>
            <person name="Li S."/>
            <person name="Ye J."/>
            <person name="Wang L."/>
            <person name="Fang L."/>
            <person name="Lei T."/>
            <person name="Chen C.-S."/>
            <person name="Chen H.-C."/>
            <person name="Xu Z."/>
            <person name="Li H."/>
            <person name="Huang H."/>
            <person name="Zhang F."/>
            <person name="Xu H."/>
            <person name="Li N."/>
            <person name="Zhao C."/>
            <person name="Li S."/>
            <person name="Dong L."/>
            <person name="Huang Y."/>
            <person name="Li L."/>
            <person name="Xi Y."/>
            <person name="Qi Q."/>
            <person name="Li W."/>
            <person name="Zhang B."/>
            <person name="Hu W."/>
            <person name="Zhang Y."/>
            <person name="Tian X."/>
            <person name="Jiao Y."/>
            <person name="Liang X."/>
            <person name="Jin J."/>
            <person name="Gao L."/>
            <person name="Zheng W."/>
            <person name="Hao B."/>
            <person name="Liu S.-M."/>
            <person name="Wang W."/>
            <person name="Yuan L."/>
            <person name="Cao M."/>
            <person name="McDermott J."/>
            <person name="Samudrala R."/>
            <person name="Wang J."/>
            <person name="Wong G.K.-S."/>
            <person name="Yang H."/>
        </authorList>
    </citation>
    <scope>NUCLEOTIDE SEQUENCE [LARGE SCALE GENOMIC DNA]</scope>
    <source>
        <strain>cv. Nipponbare</strain>
    </source>
</reference>
<reference key="7">
    <citation type="journal article" date="2003" name="Science">
        <title>Collection, mapping, and annotation of over 28,000 cDNA clones from japonica rice.</title>
        <authorList>
            <consortium name="The rice full-length cDNA consortium"/>
        </authorList>
    </citation>
    <scope>NUCLEOTIDE SEQUENCE [LARGE SCALE MRNA]</scope>
    <source>
        <strain>cv. Nipponbare</strain>
    </source>
</reference>
<keyword id="KW-0238">DNA-binding</keyword>
<keyword id="KW-0539">Nucleus</keyword>
<keyword id="KW-1185">Reference proteome</keyword>
<keyword id="KW-0804">Transcription</keyword>
<keyword id="KW-0805">Transcription regulation</keyword>
<gene>
    <name evidence="6" type="ordered locus">Os04g0676600</name>
    <name evidence="5" type="ordered locus">LOC_Os04g58000</name>
    <name evidence="8" type="ORF">OsJ_16616</name>
    <name evidence="7" type="ORF">OSJNBa0064G10.6</name>
</gene>
<comment type="function">
    <text evidence="3">Probable transcription regulator that binds specifically to the DNA sequence 5'-CATGC-3' of the IDE1 element found in the promoter of the barley iron deficiency-inducible gene IDS2.</text>
</comment>
<comment type="subcellular location">
    <subcellularLocation>
        <location evidence="1">Nucleus</location>
    </subcellularLocation>
</comment>